<sequence length="197" mass="21916">MNLIPMVIEQTNRGERSYDIYSRLLKDRIIFIGTGINDDIANSVIAQMLFLESEDPDKDIHLYINSPGGHVHAGLAIYDTMQYIRSDVSTICVGMAASMGAVLLAAGNEGKRFCLPNSRIMLHQPMGGAQGQAADVEIHAREIMKTKERLNQILAHHTGQPVEQISKDTDRDFFMSSEEAQKYGVIDDVLKRPPENS</sequence>
<gene>
    <name evidence="1" type="primary">clpP</name>
    <name type="ordered locus">Nther_1102</name>
</gene>
<protein>
    <recommendedName>
        <fullName evidence="1">ATP-dependent Clp protease proteolytic subunit</fullName>
        <ecNumber evidence="1">3.4.21.92</ecNumber>
    </recommendedName>
    <alternativeName>
        <fullName evidence="1">Endopeptidase Clp</fullName>
    </alternativeName>
</protein>
<proteinExistence type="inferred from homology"/>
<comment type="function">
    <text evidence="1">Cleaves peptides in various proteins in a process that requires ATP hydrolysis. Has a chymotrypsin-like activity. Plays a major role in the degradation of misfolded proteins.</text>
</comment>
<comment type="catalytic activity">
    <reaction evidence="1">
        <text>Hydrolysis of proteins to small peptides in the presence of ATP and magnesium. alpha-casein is the usual test substrate. In the absence of ATP, only oligopeptides shorter than five residues are hydrolyzed (such as succinyl-Leu-Tyr-|-NHMec, and Leu-Tyr-Leu-|-Tyr-Trp, in which cleavage of the -Tyr-|-Leu- and -Tyr-|-Trp bonds also occurs).</text>
        <dbReference type="EC" id="3.4.21.92"/>
    </reaction>
</comment>
<comment type="subunit">
    <text evidence="1">Fourteen ClpP subunits assemble into 2 heptameric rings which stack back to back to give a disk-like structure with a central cavity, resembling the structure of eukaryotic proteasomes.</text>
</comment>
<comment type="subcellular location">
    <subcellularLocation>
        <location evidence="1">Cytoplasm</location>
    </subcellularLocation>
</comment>
<comment type="similarity">
    <text evidence="1">Belongs to the peptidase S14 family.</text>
</comment>
<keyword id="KW-0963">Cytoplasm</keyword>
<keyword id="KW-0378">Hydrolase</keyword>
<keyword id="KW-0645">Protease</keyword>
<keyword id="KW-1185">Reference proteome</keyword>
<keyword id="KW-0720">Serine protease</keyword>
<feature type="chain" id="PRO_1000206158" description="ATP-dependent Clp protease proteolytic subunit">
    <location>
        <begin position="1"/>
        <end position="197"/>
    </location>
</feature>
<feature type="active site" description="Nucleophile" evidence="1">
    <location>
        <position position="98"/>
    </location>
</feature>
<feature type="active site" evidence="1">
    <location>
        <position position="123"/>
    </location>
</feature>
<reference key="1">
    <citation type="submission" date="2008-04" db="EMBL/GenBank/DDBJ databases">
        <title>Complete sequence of chromosome of Natranaerobius thermophilus JW/NM-WN-LF.</title>
        <authorList>
            <consortium name="US DOE Joint Genome Institute"/>
            <person name="Copeland A."/>
            <person name="Lucas S."/>
            <person name="Lapidus A."/>
            <person name="Glavina del Rio T."/>
            <person name="Dalin E."/>
            <person name="Tice H."/>
            <person name="Bruce D."/>
            <person name="Goodwin L."/>
            <person name="Pitluck S."/>
            <person name="Chertkov O."/>
            <person name="Brettin T."/>
            <person name="Detter J.C."/>
            <person name="Han C."/>
            <person name="Kuske C.R."/>
            <person name="Schmutz J."/>
            <person name="Larimer F."/>
            <person name="Land M."/>
            <person name="Hauser L."/>
            <person name="Kyrpides N."/>
            <person name="Lykidis A."/>
            <person name="Mesbah N.M."/>
            <person name="Wiegel J."/>
        </authorList>
    </citation>
    <scope>NUCLEOTIDE SEQUENCE [LARGE SCALE GENOMIC DNA]</scope>
    <source>
        <strain>ATCC BAA-1301 / DSM 18059 / JW/NM-WN-LF</strain>
    </source>
</reference>
<name>CLPP_NATTJ</name>
<evidence type="ECO:0000255" key="1">
    <source>
        <dbReference type="HAMAP-Rule" id="MF_00444"/>
    </source>
</evidence>
<dbReference type="EC" id="3.4.21.92" evidence="1"/>
<dbReference type="EMBL" id="CP001034">
    <property type="protein sequence ID" value="ACB84685.1"/>
    <property type="molecule type" value="Genomic_DNA"/>
</dbReference>
<dbReference type="RefSeq" id="WP_012447560.1">
    <property type="nucleotide sequence ID" value="NC_010718.1"/>
</dbReference>
<dbReference type="SMR" id="B2A158"/>
<dbReference type="FunCoup" id="B2A158">
    <property type="interactions" value="374"/>
</dbReference>
<dbReference type="STRING" id="457570.Nther_1102"/>
<dbReference type="MEROPS" id="S14.001"/>
<dbReference type="KEGG" id="nth:Nther_1102"/>
<dbReference type="eggNOG" id="COG0740">
    <property type="taxonomic scope" value="Bacteria"/>
</dbReference>
<dbReference type="HOGENOM" id="CLU_058707_3_2_9"/>
<dbReference type="InParanoid" id="B2A158"/>
<dbReference type="OrthoDB" id="9802800at2"/>
<dbReference type="Proteomes" id="UP000001683">
    <property type="component" value="Chromosome"/>
</dbReference>
<dbReference type="GO" id="GO:0005737">
    <property type="term" value="C:cytoplasm"/>
    <property type="evidence" value="ECO:0007669"/>
    <property type="project" value="UniProtKB-SubCell"/>
</dbReference>
<dbReference type="GO" id="GO:0009368">
    <property type="term" value="C:endopeptidase Clp complex"/>
    <property type="evidence" value="ECO:0007669"/>
    <property type="project" value="TreeGrafter"/>
</dbReference>
<dbReference type="GO" id="GO:0004176">
    <property type="term" value="F:ATP-dependent peptidase activity"/>
    <property type="evidence" value="ECO:0007669"/>
    <property type="project" value="InterPro"/>
</dbReference>
<dbReference type="GO" id="GO:0051117">
    <property type="term" value="F:ATPase binding"/>
    <property type="evidence" value="ECO:0007669"/>
    <property type="project" value="TreeGrafter"/>
</dbReference>
<dbReference type="GO" id="GO:0004252">
    <property type="term" value="F:serine-type endopeptidase activity"/>
    <property type="evidence" value="ECO:0007669"/>
    <property type="project" value="UniProtKB-UniRule"/>
</dbReference>
<dbReference type="GO" id="GO:0006515">
    <property type="term" value="P:protein quality control for misfolded or incompletely synthesized proteins"/>
    <property type="evidence" value="ECO:0007669"/>
    <property type="project" value="TreeGrafter"/>
</dbReference>
<dbReference type="CDD" id="cd07017">
    <property type="entry name" value="S14_ClpP_2"/>
    <property type="match status" value="1"/>
</dbReference>
<dbReference type="FunFam" id="3.90.226.10:FF:000001">
    <property type="entry name" value="ATP-dependent Clp protease proteolytic subunit"/>
    <property type="match status" value="1"/>
</dbReference>
<dbReference type="Gene3D" id="3.90.226.10">
    <property type="entry name" value="2-enoyl-CoA Hydratase, Chain A, domain 1"/>
    <property type="match status" value="1"/>
</dbReference>
<dbReference type="HAMAP" id="MF_00444">
    <property type="entry name" value="ClpP"/>
    <property type="match status" value="1"/>
</dbReference>
<dbReference type="InterPro" id="IPR001907">
    <property type="entry name" value="ClpP"/>
</dbReference>
<dbReference type="InterPro" id="IPR029045">
    <property type="entry name" value="ClpP/crotonase-like_dom_sf"/>
</dbReference>
<dbReference type="InterPro" id="IPR023562">
    <property type="entry name" value="ClpP/TepA"/>
</dbReference>
<dbReference type="InterPro" id="IPR033135">
    <property type="entry name" value="ClpP_His_AS"/>
</dbReference>
<dbReference type="InterPro" id="IPR018215">
    <property type="entry name" value="ClpP_Ser_AS"/>
</dbReference>
<dbReference type="NCBIfam" id="TIGR00493">
    <property type="entry name" value="clpP"/>
    <property type="match status" value="1"/>
</dbReference>
<dbReference type="NCBIfam" id="NF001368">
    <property type="entry name" value="PRK00277.1"/>
    <property type="match status" value="1"/>
</dbReference>
<dbReference type="NCBIfam" id="NF009205">
    <property type="entry name" value="PRK12553.1"/>
    <property type="match status" value="1"/>
</dbReference>
<dbReference type="PANTHER" id="PTHR10381">
    <property type="entry name" value="ATP-DEPENDENT CLP PROTEASE PROTEOLYTIC SUBUNIT"/>
    <property type="match status" value="1"/>
</dbReference>
<dbReference type="PANTHER" id="PTHR10381:SF70">
    <property type="entry name" value="ATP-DEPENDENT CLP PROTEASE PROTEOLYTIC SUBUNIT"/>
    <property type="match status" value="1"/>
</dbReference>
<dbReference type="Pfam" id="PF00574">
    <property type="entry name" value="CLP_protease"/>
    <property type="match status" value="1"/>
</dbReference>
<dbReference type="PRINTS" id="PR00127">
    <property type="entry name" value="CLPPROTEASEP"/>
</dbReference>
<dbReference type="SUPFAM" id="SSF52096">
    <property type="entry name" value="ClpP/crotonase"/>
    <property type="match status" value="1"/>
</dbReference>
<dbReference type="PROSITE" id="PS00382">
    <property type="entry name" value="CLP_PROTEASE_HIS"/>
    <property type="match status" value="1"/>
</dbReference>
<dbReference type="PROSITE" id="PS00381">
    <property type="entry name" value="CLP_PROTEASE_SER"/>
    <property type="match status" value="1"/>
</dbReference>
<accession>B2A158</accession>
<organism>
    <name type="scientific">Natranaerobius thermophilus (strain ATCC BAA-1301 / DSM 18059 / JW/NM-WN-LF)</name>
    <dbReference type="NCBI Taxonomy" id="457570"/>
    <lineage>
        <taxon>Bacteria</taxon>
        <taxon>Bacillati</taxon>
        <taxon>Bacillota</taxon>
        <taxon>Clostridia</taxon>
        <taxon>Natranaerobiales</taxon>
        <taxon>Natranaerobiaceae</taxon>
        <taxon>Natranaerobius</taxon>
    </lineage>
</organism>